<dbReference type="EMBL" id="AY125955">
    <property type="protein sequence ID" value="AAM94507.1"/>
    <property type="molecule type" value="mRNA"/>
</dbReference>
<dbReference type="EMBL" id="BC022075">
    <property type="protein sequence ID" value="AAH22075.1"/>
    <property type="molecule type" value="mRNA"/>
</dbReference>
<dbReference type="EMBL" id="BC033515">
    <property type="protein sequence ID" value="AAH33515.1"/>
    <property type="molecule type" value="mRNA"/>
</dbReference>
<dbReference type="EMBL" id="CR936638">
    <property type="protein sequence ID" value="CAI56778.1"/>
    <property type="molecule type" value="mRNA"/>
</dbReference>
<dbReference type="CCDS" id="CCDS10143.1">
    <molecule id="Q8IV50-1"/>
</dbReference>
<dbReference type="CCDS" id="CCDS45259.1">
    <molecule id="Q8IV50-2"/>
</dbReference>
<dbReference type="RefSeq" id="NP_001137389.1">
    <molecule id="Q8IV50-2"/>
    <property type="nucleotide sequence ID" value="NM_001143917.2"/>
</dbReference>
<dbReference type="RefSeq" id="NP_001350898.1">
    <molecule id="Q8IV50-2"/>
    <property type="nucleotide sequence ID" value="NM_001363969.2"/>
</dbReference>
<dbReference type="RefSeq" id="NP_699205.1">
    <molecule id="Q8IV50-1"/>
    <property type="nucleotide sequence ID" value="NM_153374.3"/>
</dbReference>
<dbReference type="RefSeq" id="XP_016877546.1">
    <property type="nucleotide sequence ID" value="XM_017022057.1"/>
</dbReference>
<dbReference type="RefSeq" id="XP_054233644.1">
    <molecule id="Q8IV50-2"/>
    <property type="nucleotide sequence ID" value="XM_054377669.1"/>
</dbReference>
<dbReference type="SMR" id="Q8IV50"/>
<dbReference type="BioGRID" id="129172">
    <property type="interactions" value="18"/>
</dbReference>
<dbReference type="FunCoup" id="Q8IV50">
    <property type="interactions" value="176"/>
</dbReference>
<dbReference type="IntAct" id="Q8IV50">
    <property type="interactions" value="15"/>
</dbReference>
<dbReference type="STRING" id="9606.ENSP00000267838"/>
<dbReference type="iPTMnet" id="Q8IV50"/>
<dbReference type="PhosphoSitePlus" id="Q8IV50"/>
<dbReference type="BioMuta" id="LYSMD2"/>
<dbReference type="DMDM" id="74728034"/>
<dbReference type="jPOST" id="Q8IV50"/>
<dbReference type="MassIVE" id="Q8IV50"/>
<dbReference type="PaxDb" id="9606-ENSP00000267838"/>
<dbReference type="PeptideAtlas" id="Q8IV50"/>
<dbReference type="ProteomicsDB" id="70660">
    <molecule id="Q8IV50-1"/>
</dbReference>
<dbReference type="ProteomicsDB" id="70661">
    <molecule id="Q8IV50-2"/>
</dbReference>
<dbReference type="Pumba" id="Q8IV50"/>
<dbReference type="Antibodypedia" id="24890">
    <property type="antibodies" value="39 antibodies from 17 providers"/>
</dbReference>
<dbReference type="DNASU" id="256586"/>
<dbReference type="Ensembl" id="ENST00000267838.7">
    <molecule id="Q8IV50-1"/>
    <property type="protein sequence ID" value="ENSP00000267838.3"/>
    <property type="gene ID" value="ENSG00000140280.14"/>
</dbReference>
<dbReference type="Ensembl" id="ENST00000454181.6">
    <molecule id="Q8IV50-2"/>
    <property type="protein sequence ID" value="ENSP00000410424.2"/>
    <property type="gene ID" value="ENSG00000140280.14"/>
</dbReference>
<dbReference type="Ensembl" id="ENST00000560491.2">
    <molecule id="Q8IV50-2"/>
    <property type="protein sequence ID" value="ENSP00000453933.1"/>
    <property type="gene ID" value="ENSG00000140280.14"/>
</dbReference>
<dbReference type="GeneID" id="256586"/>
<dbReference type="KEGG" id="hsa:256586"/>
<dbReference type="MANE-Select" id="ENST00000267838.7">
    <property type="protein sequence ID" value="ENSP00000267838.3"/>
    <property type="RefSeq nucleotide sequence ID" value="NM_153374.3"/>
    <property type="RefSeq protein sequence ID" value="NP_699205.1"/>
</dbReference>
<dbReference type="UCSC" id="uc002abi.4">
    <molecule id="Q8IV50-1"/>
    <property type="organism name" value="human"/>
</dbReference>
<dbReference type="AGR" id="HGNC:28571"/>
<dbReference type="CTD" id="256586"/>
<dbReference type="DisGeNET" id="256586"/>
<dbReference type="GeneCards" id="LYSMD2"/>
<dbReference type="HGNC" id="HGNC:28571">
    <property type="gene designation" value="LYSMD2"/>
</dbReference>
<dbReference type="HPA" id="ENSG00000140280">
    <property type="expression patterns" value="Low tissue specificity"/>
</dbReference>
<dbReference type="neXtProt" id="NX_Q8IV50"/>
<dbReference type="OpenTargets" id="ENSG00000140280"/>
<dbReference type="PharmGKB" id="PA142671494"/>
<dbReference type="VEuPathDB" id="HostDB:ENSG00000140280"/>
<dbReference type="eggNOG" id="ENOG502S0XR">
    <property type="taxonomic scope" value="Eukaryota"/>
</dbReference>
<dbReference type="GeneTree" id="ENSGT00940000160054"/>
<dbReference type="HOGENOM" id="CLU_079453_1_0_1"/>
<dbReference type="InParanoid" id="Q8IV50"/>
<dbReference type="OMA" id="HRMDVQI"/>
<dbReference type="OrthoDB" id="2107166at2759"/>
<dbReference type="PAN-GO" id="Q8IV50">
    <property type="GO annotations" value="0 GO annotations based on evolutionary models"/>
</dbReference>
<dbReference type="PhylomeDB" id="Q8IV50"/>
<dbReference type="TreeFam" id="TF318444"/>
<dbReference type="PathwayCommons" id="Q8IV50"/>
<dbReference type="SignaLink" id="Q8IV50"/>
<dbReference type="BioGRID-ORCS" id="256586">
    <property type="hits" value="7 hits in 1155 CRISPR screens"/>
</dbReference>
<dbReference type="GenomeRNAi" id="256586"/>
<dbReference type="Pharos" id="Q8IV50">
    <property type="development level" value="Tdark"/>
</dbReference>
<dbReference type="PRO" id="PR:Q8IV50"/>
<dbReference type="Proteomes" id="UP000005640">
    <property type="component" value="Chromosome 15"/>
</dbReference>
<dbReference type="RNAct" id="Q8IV50">
    <property type="molecule type" value="protein"/>
</dbReference>
<dbReference type="Bgee" id="ENSG00000140280">
    <property type="expression patterns" value="Expressed in pons and 190 other cell types or tissues"/>
</dbReference>
<dbReference type="ExpressionAtlas" id="Q8IV50">
    <property type="expression patterns" value="baseline and differential"/>
</dbReference>
<dbReference type="CDD" id="cd00118">
    <property type="entry name" value="LysM"/>
    <property type="match status" value="1"/>
</dbReference>
<dbReference type="Gene3D" id="3.10.350.10">
    <property type="entry name" value="LysM domain"/>
    <property type="match status" value="1"/>
</dbReference>
<dbReference type="InterPro" id="IPR045030">
    <property type="entry name" value="LYSM1-4"/>
</dbReference>
<dbReference type="InterPro" id="IPR018392">
    <property type="entry name" value="LysM_dom"/>
</dbReference>
<dbReference type="InterPro" id="IPR036779">
    <property type="entry name" value="LysM_dom_sf"/>
</dbReference>
<dbReference type="PANTHER" id="PTHR20932:SF4">
    <property type="entry name" value="AND PUTATIVE PEPTIDOGLYCAN-BINDING DOMAIN-CONTAINING PROTEIN 2-RELATED"/>
    <property type="match status" value="1"/>
</dbReference>
<dbReference type="PANTHER" id="PTHR20932">
    <property type="entry name" value="LYSM AND PUTATIVE PEPTIDOGLYCAN-BINDING DOMAIN-CONTAINING PROTEIN"/>
    <property type="match status" value="1"/>
</dbReference>
<dbReference type="Pfam" id="PF01476">
    <property type="entry name" value="LysM"/>
    <property type="match status" value="1"/>
</dbReference>
<dbReference type="SMART" id="SM00257">
    <property type="entry name" value="LysM"/>
    <property type="match status" value="1"/>
</dbReference>
<dbReference type="SUPFAM" id="SSF54106">
    <property type="entry name" value="LysM domain"/>
    <property type="match status" value="1"/>
</dbReference>
<dbReference type="PROSITE" id="PS51782">
    <property type="entry name" value="LYSM"/>
    <property type="match status" value="1"/>
</dbReference>
<comment type="interaction">
    <interactant intactId="EBI-19761491">
        <id>Q8IV50-2</id>
    </interactant>
    <interactant intactId="EBI-741885">
        <id>Q96LK0</id>
        <label>CEP19</label>
    </interactant>
    <organismsDiffer>false</organismsDiffer>
    <experiments>3</experiments>
</comment>
<comment type="interaction">
    <interactant intactId="EBI-19761491">
        <id>Q8IV50-2</id>
    </interactant>
    <interactant intactId="EBI-6591081">
        <id>Q13115</id>
        <label>DUSP4</label>
    </interactant>
    <organismsDiffer>false</organismsDiffer>
    <experiments>3</experiments>
</comment>
<comment type="interaction">
    <interactant intactId="EBI-19761491">
        <id>Q8IV50-2</id>
    </interactant>
    <interactant intactId="EBI-19762110">
        <id>Q8WX39</id>
        <label>LCN9</label>
    </interactant>
    <organismsDiffer>false</organismsDiffer>
    <experiments>3</experiments>
</comment>
<comment type="alternative products">
    <event type="alternative splicing"/>
    <isoform>
        <id>Q8IV50-1</id>
        <name>1</name>
        <sequence type="displayed"/>
    </isoform>
    <isoform>
        <id>Q8IV50-2</id>
        <name>2</name>
        <sequence type="described" ref="VSP_020123"/>
    </isoform>
</comment>
<name>LYSM2_HUMAN</name>
<protein>
    <recommendedName>
        <fullName>LysM and putative peptidoglycan-binding domain-containing protein 2</fullName>
    </recommendedName>
</protein>
<organism>
    <name type="scientific">Homo sapiens</name>
    <name type="common">Human</name>
    <dbReference type="NCBI Taxonomy" id="9606"/>
    <lineage>
        <taxon>Eukaryota</taxon>
        <taxon>Metazoa</taxon>
        <taxon>Chordata</taxon>
        <taxon>Craniata</taxon>
        <taxon>Vertebrata</taxon>
        <taxon>Euteleostomi</taxon>
        <taxon>Mammalia</taxon>
        <taxon>Eutheria</taxon>
        <taxon>Euarchontoglires</taxon>
        <taxon>Primates</taxon>
        <taxon>Haplorrhini</taxon>
        <taxon>Catarrhini</taxon>
        <taxon>Hominidae</taxon>
        <taxon>Homo</taxon>
    </lineage>
</organism>
<accession>Q8IV50</accession>
<accession>Q5CZ88</accession>
<accession>Q8WTV3</accession>
<reference key="1">
    <citation type="submission" date="2002-06" db="EMBL/GenBank/DDBJ databases">
        <authorList>
            <person name="Ding P."/>
            <person name="Han W."/>
            <person name="Wang Y."/>
            <person name="Rui M."/>
            <person name="Chen Y."/>
            <person name="Wang L."/>
            <person name="Ma D."/>
        </authorList>
    </citation>
    <scope>NUCLEOTIDE SEQUENCE [MRNA] (ISOFORM 1)</scope>
</reference>
<reference key="2">
    <citation type="journal article" date="2004" name="Genome Res.">
        <title>The status, quality, and expansion of the NIH full-length cDNA project: the Mammalian Gene Collection (MGC).</title>
        <authorList>
            <consortium name="The MGC Project Team"/>
        </authorList>
    </citation>
    <scope>NUCLEOTIDE SEQUENCE [LARGE SCALE MRNA] (ISOFORMS 1 AND 2)</scope>
    <source>
        <tissue>Hypothalamus</tissue>
    </source>
</reference>
<reference key="3">
    <citation type="journal article" date="2007" name="BMC Genomics">
        <title>The full-ORF clone resource of the German cDNA consortium.</title>
        <authorList>
            <person name="Bechtel S."/>
            <person name="Rosenfelder H."/>
            <person name="Duda A."/>
            <person name="Schmidt C.P."/>
            <person name="Ernst U."/>
            <person name="Wellenreuther R."/>
            <person name="Mehrle A."/>
            <person name="Schuster C."/>
            <person name="Bahr A."/>
            <person name="Bloecker H."/>
            <person name="Heubner D."/>
            <person name="Hoerlein A."/>
            <person name="Michel G."/>
            <person name="Wedler H."/>
            <person name="Koehrer K."/>
            <person name="Ottenwaelder B."/>
            <person name="Poustka A."/>
            <person name="Wiemann S."/>
            <person name="Schupp I."/>
        </authorList>
    </citation>
    <scope>NUCLEOTIDE SEQUENCE [LARGE SCALE MRNA] OF 155-215 (ISOFORMS 1/2)</scope>
    <source>
        <tissue>Amygdala</tissue>
    </source>
</reference>
<reference key="4">
    <citation type="journal article" date="2005" name="Nat. Biotechnol.">
        <title>Immunoaffinity profiling of tyrosine phosphorylation in cancer cells.</title>
        <authorList>
            <person name="Rush J."/>
            <person name="Moritz A."/>
            <person name="Lee K.A."/>
            <person name="Guo A."/>
            <person name="Goss V.L."/>
            <person name="Spek E.J."/>
            <person name="Zhang H."/>
            <person name="Zha X.-M."/>
            <person name="Polakiewicz R.D."/>
            <person name="Comb M.J."/>
        </authorList>
    </citation>
    <scope>IDENTIFICATION BY MASS SPECTROMETRY [LARGE SCALE ANALYSIS]</scope>
</reference>
<reference key="5">
    <citation type="journal article" date="2009" name="Sci. Signal.">
        <title>Quantitative phosphoproteomic analysis of T cell receptor signaling reveals system-wide modulation of protein-protein interactions.</title>
        <authorList>
            <person name="Mayya V."/>
            <person name="Lundgren D.H."/>
            <person name="Hwang S.-I."/>
            <person name="Rezaul K."/>
            <person name="Wu L."/>
            <person name="Eng J.K."/>
            <person name="Rodionov V."/>
            <person name="Han D.K."/>
        </authorList>
    </citation>
    <scope>PHOSPHORYLATION [LARGE SCALE ANALYSIS] AT SER-33</scope>
    <scope>IDENTIFICATION BY MASS SPECTROMETRY [LARGE SCALE ANALYSIS]</scope>
    <source>
        <tissue>Leukemic T-cell</tissue>
    </source>
</reference>
<reference key="6">
    <citation type="journal article" date="2010" name="Sci. Signal.">
        <title>Quantitative phosphoproteomics reveals widespread full phosphorylation site occupancy during mitosis.</title>
        <authorList>
            <person name="Olsen J.V."/>
            <person name="Vermeulen M."/>
            <person name="Santamaria A."/>
            <person name="Kumar C."/>
            <person name="Miller M.L."/>
            <person name="Jensen L.J."/>
            <person name="Gnad F."/>
            <person name="Cox J."/>
            <person name="Jensen T.S."/>
            <person name="Nigg E.A."/>
            <person name="Brunak S."/>
            <person name="Mann M."/>
        </authorList>
    </citation>
    <scope>ACETYLATION [LARGE SCALE ANALYSIS] AT ALA-2</scope>
    <scope>PHOSPHORYLATION [LARGE SCALE ANALYSIS] AT SER-5</scope>
    <scope>CLEAVAGE OF INITIATOR METHIONINE [LARGE SCALE ANALYSIS]</scope>
    <scope>IDENTIFICATION BY MASS SPECTROMETRY [LARGE SCALE ANALYSIS]</scope>
    <source>
        <tissue>Cervix carcinoma</tissue>
    </source>
</reference>
<reference key="7">
    <citation type="journal article" date="2012" name="Proc. Natl. Acad. Sci. U.S.A.">
        <title>N-terminal acetylome analyses and functional insights of the N-terminal acetyltransferase NatB.</title>
        <authorList>
            <person name="Van Damme P."/>
            <person name="Lasa M."/>
            <person name="Polevoda B."/>
            <person name="Gazquez C."/>
            <person name="Elosegui-Artola A."/>
            <person name="Kim D.S."/>
            <person name="De Juan-Pardo E."/>
            <person name="Demeyer K."/>
            <person name="Hole K."/>
            <person name="Larrea E."/>
            <person name="Timmerman E."/>
            <person name="Prieto J."/>
            <person name="Arnesen T."/>
            <person name="Sherman F."/>
            <person name="Gevaert K."/>
            <person name="Aldabe R."/>
        </authorList>
    </citation>
    <scope>ACETYLATION [LARGE SCALE ANALYSIS] AT ALA-2</scope>
    <scope>CLEAVAGE OF INITIATOR METHIONINE [LARGE SCALE ANALYSIS]</scope>
    <scope>IDENTIFICATION BY MASS SPECTROMETRY [LARGE SCALE ANALYSIS]</scope>
</reference>
<reference key="8">
    <citation type="journal article" date="2013" name="J. Proteome Res.">
        <title>Toward a comprehensive characterization of a human cancer cell phosphoproteome.</title>
        <authorList>
            <person name="Zhou H."/>
            <person name="Di Palma S."/>
            <person name="Preisinger C."/>
            <person name="Peng M."/>
            <person name="Polat A.N."/>
            <person name="Heck A.J."/>
            <person name="Mohammed S."/>
        </authorList>
    </citation>
    <scope>PHOSPHORYLATION [LARGE SCALE ANALYSIS] AT SER-5; SER-24; SER-33 AND SER-57</scope>
    <scope>IDENTIFICATION BY MASS SPECTROMETRY [LARGE SCALE ANALYSIS]</scope>
    <source>
        <tissue>Cervix carcinoma</tissue>
        <tissue>Erythroleukemia</tissue>
    </source>
</reference>
<reference key="9">
    <citation type="journal article" date="2014" name="J. Proteomics">
        <title>An enzyme assisted RP-RPLC approach for in-depth analysis of human liver phosphoproteome.</title>
        <authorList>
            <person name="Bian Y."/>
            <person name="Song C."/>
            <person name="Cheng K."/>
            <person name="Dong M."/>
            <person name="Wang F."/>
            <person name="Huang J."/>
            <person name="Sun D."/>
            <person name="Wang L."/>
            <person name="Ye M."/>
            <person name="Zou H."/>
        </authorList>
    </citation>
    <scope>PHOSPHORYLATION [LARGE SCALE ANALYSIS] AT SER-24</scope>
    <scope>IDENTIFICATION BY MASS SPECTROMETRY [LARGE SCALE ANALYSIS]</scope>
    <source>
        <tissue>Liver</tissue>
    </source>
</reference>
<sequence>MADSSPALSLREGGPRAPRPSAPSPPPRSRSGSESEEAELSLSLARTKTRSYGSTASVRAPLGAGVIERHVEHRVRAGDTLQGIALKYGVTMEQIKRANKLFTNDCIFLKKTLNIPVISEKPLLFNGLNSIDSPENETADNSFSQEEEPVVAGEDLPPPSPQESDVQPVQPEEVSARDFLQRLDLQIKLSTQAAKKLKEESRDEESPYATSLYHS</sequence>
<gene>
    <name type="primary">LYSMD2</name>
</gene>
<feature type="initiator methionine" description="Removed" evidence="5 6">
    <location>
        <position position="1"/>
    </location>
</feature>
<feature type="chain" id="PRO_0000248002" description="LysM and putative peptidoglycan-binding domain-containing protein 2">
    <location>
        <begin position="2"/>
        <end position="215"/>
    </location>
</feature>
<feature type="domain" description="LysM" evidence="1">
    <location>
        <begin position="71"/>
        <end position="115"/>
    </location>
</feature>
<feature type="region of interest" description="Disordered" evidence="2">
    <location>
        <begin position="1"/>
        <end position="40"/>
    </location>
</feature>
<feature type="region of interest" description="Disordered" evidence="2">
    <location>
        <begin position="132"/>
        <end position="175"/>
    </location>
</feature>
<feature type="region of interest" description="Disordered" evidence="2">
    <location>
        <begin position="193"/>
        <end position="215"/>
    </location>
</feature>
<feature type="compositionally biased region" description="Pro residues" evidence="2">
    <location>
        <begin position="17"/>
        <end position="28"/>
    </location>
</feature>
<feature type="compositionally biased region" description="Basic and acidic residues" evidence="2">
    <location>
        <begin position="196"/>
        <end position="205"/>
    </location>
</feature>
<feature type="modified residue" description="N-acetylalanine" evidence="5 6">
    <location>
        <position position="2"/>
    </location>
</feature>
<feature type="modified residue" description="Phosphoserine" evidence="5 7">
    <location>
        <position position="5"/>
    </location>
</feature>
<feature type="modified residue" description="Phosphoserine" evidence="7 8">
    <location>
        <position position="24"/>
    </location>
</feature>
<feature type="modified residue" description="Phosphoserine" evidence="4 7">
    <location>
        <position position="33"/>
    </location>
</feature>
<feature type="modified residue" description="Phosphoserine" evidence="7">
    <location>
        <position position="57"/>
    </location>
</feature>
<feature type="splice variant" id="VSP_020123" description="In isoform 2." evidence="3">
    <location>
        <begin position="1"/>
        <end position="91"/>
    </location>
</feature>
<feature type="sequence variant" id="VAR_027198" description="In dbSNP:rs3751593.">
    <original>I</original>
    <variation>V</variation>
    <location>
        <position position="107"/>
    </location>
</feature>
<feature type="sequence variant" id="VAR_027199" description="In dbSNP:rs7168775.">
    <original>S</original>
    <variation>F</variation>
    <location>
        <position position="164"/>
    </location>
</feature>
<keyword id="KW-0007">Acetylation</keyword>
<keyword id="KW-0025">Alternative splicing</keyword>
<keyword id="KW-0597">Phosphoprotein</keyword>
<keyword id="KW-1267">Proteomics identification</keyword>
<keyword id="KW-1185">Reference proteome</keyword>
<proteinExistence type="evidence at protein level"/>
<evidence type="ECO:0000255" key="1">
    <source>
        <dbReference type="PROSITE-ProRule" id="PRU01118"/>
    </source>
</evidence>
<evidence type="ECO:0000256" key="2">
    <source>
        <dbReference type="SAM" id="MobiDB-lite"/>
    </source>
</evidence>
<evidence type="ECO:0000303" key="3">
    <source>
    </source>
</evidence>
<evidence type="ECO:0007744" key="4">
    <source>
    </source>
</evidence>
<evidence type="ECO:0007744" key="5">
    <source>
    </source>
</evidence>
<evidence type="ECO:0007744" key="6">
    <source>
    </source>
</evidence>
<evidence type="ECO:0007744" key="7">
    <source>
    </source>
</evidence>
<evidence type="ECO:0007744" key="8">
    <source>
    </source>
</evidence>